<reference key="1">
    <citation type="journal article" date="2000" name="Nature">
        <title>Sequence and analysis of chromosome 1 of the plant Arabidopsis thaliana.</title>
        <authorList>
            <person name="Theologis A."/>
            <person name="Ecker J.R."/>
            <person name="Palm C.J."/>
            <person name="Federspiel N.A."/>
            <person name="Kaul S."/>
            <person name="White O."/>
            <person name="Alonso J."/>
            <person name="Altafi H."/>
            <person name="Araujo R."/>
            <person name="Bowman C.L."/>
            <person name="Brooks S.Y."/>
            <person name="Buehler E."/>
            <person name="Chan A."/>
            <person name="Chao Q."/>
            <person name="Chen H."/>
            <person name="Cheuk R.F."/>
            <person name="Chin C.W."/>
            <person name="Chung M.K."/>
            <person name="Conn L."/>
            <person name="Conway A.B."/>
            <person name="Conway A.R."/>
            <person name="Creasy T.H."/>
            <person name="Dewar K."/>
            <person name="Dunn P."/>
            <person name="Etgu P."/>
            <person name="Feldblyum T.V."/>
            <person name="Feng J.-D."/>
            <person name="Fong B."/>
            <person name="Fujii C.Y."/>
            <person name="Gill J.E."/>
            <person name="Goldsmith A.D."/>
            <person name="Haas B."/>
            <person name="Hansen N.F."/>
            <person name="Hughes B."/>
            <person name="Huizar L."/>
            <person name="Hunter J.L."/>
            <person name="Jenkins J."/>
            <person name="Johnson-Hopson C."/>
            <person name="Khan S."/>
            <person name="Khaykin E."/>
            <person name="Kim C.J."/>
            <person name="Koo H.L."/>
            <person name="Kremenetskaia I."/>
            <person name="Kurtz D.B."/>
            <person name="Kwan A."/>
            <person name="Lam B."/>
            <person name="Langin-Hooper S."/>
            <person name="Lee A."/>
            <person name="Lee J.M."/>
            <person name="Lenz C.A."/>
            <person name="Li J.H."/>
            <person name="Li Y.-P."/>
            <person name="Lin X."/>
            <person name="Liu S.X."/>
            <person name="Liu Z.A."/>
            <person name="Luros J.S."/>
            <person name="Maiti R."/>
            <person name="Marziali A."/>
            <person name="Militscher J."/>
            <person name="Miranda M."/>
            <person name="Nguyen M."/>
            <person name="Nierman W.C."/>
            <person name="Osborne B.I."/>
            <person name="Pai G."/>
            <person name="Peterson J."/>
            <person name="Pham P.K."/>
            <person name="Rizzo M."/>
            <person name="Rooney T."/>
            <person name="Rowley D."/>
            <person name="Sakano H."/>
            <person name="Salzberg S.L."/>
            <person name="Schwartz J.R."/>
            <person name="Shinn P."/>
            <person name="Southwick A.M."/>
            <person name="Sun H."/>
            <person name="Tallon L.J."/>
            <person name="Tambunga G."/>
            <person name="Toriumi M.J."/>
            <person name="Town C.D."/>
            <person name="Utterback T."/>
            <person name="Van Aken S."/>
            <person name="Vaysberg M."/>
            <person name="Vysotskaia V.S."/>
            <person name="Walker M."/>
            <person name="Wu D."/>
            <person name="Yu G."/>
            <person name="Fraser C.M."/>
            <person name="Venter J.C."/>
            <person name="Davis R.W."/>
        </authorList>
    </citation>
    <scope>NUCLEOTIDE SEQUENCE [LARGE SCALE GENOMIC DNA]</scope>
    <source>
        <strain>cv. Columbia</strain>
    </source>
</reference>
<reference key="2">
    <citation type="journal article" date="2017" name="Plant J.">
        <title>Araport11: a complete reannotation of the Arabidopsis thaliana reference genome.</title>
        <authorList>
            <person name="Cheng C.Y."/>
            <person name="Krishnakumar V."/>
            <person name="Chan A.P."/>
            <person name="Thibaud-Nissen F."/>
            <person name="Schobel S."/>
            <person name="Town C.D."/>
        </authorList>
    </citation>
    <scope>GENOME REANNOTATION</scope>
    <source>
        <strain>cv. Columbia</strain>
    </source>
</reference>
<reference key="3">
    <citation type="journal article" date="2005" name="Nature">
        <title>A new family of RhoGEFs activates the Rop molecular switch in plants.</title>
        <authorList>
            <person name="Berken A."/>
            <person name="Thomas C."/>
            <person name="Wittinghofer A."/>
        </authorList>
    </citation>
    <scope>CHARACTERIZATION</scope>
    <scope>FUNCTION</scope>
    <scope>GENE FAMILY</scope>
</reference>
<reference key="4">
    <citation type="journal article" date="2012" name="FEBS Lett.">
        <title>ROPGEF1 and ROPGEF4 are functional regulators of ROP11 GTPase in ABA-mediated stomatal closure in Arabidopsis.</title>
        <authorList>
            <person name="Li Z."/>
            <person name="Liu D."/>
        </authorList>
    </citation>
    <scope>INTERACTION WITH ARAC10/ROP11</scope>
    <scope>TISSUE SPECIFICITY</scope>
</reference>
<proteinExistence type="evidence at protein level"/>
<accession>Q9LQ89</accession>
<feature type="chain" id="PRO_0000234059" description="Rop guanine nucleotide exchange factor 2">
    <location>
        <begin position="1"/>
        <end position="485"/>
    </location>
</feature>
<feature type="domain" description="PRONE" evidence="2">
    <location>
        <begin position="107"/>
        <end position="485"/>
    </location>
</feature>
<feature type="region of interest" description="Disordered" evidence="3">
    <location>
        <begin position="1"/>
        <end position="36"/>
    </location>
</feature>
<keyword id="KW-0344">Guanine-nucleotide releasing factor</keyword>
<keyword id="KW-1185">Reference proteome</keyword>
<organism>
    <name type="scientific">Arabidopsis thaliana</name>
    <name type="common">Mouse-ear cress</name>
    <dbReference type="NCBI Taxonomy" id="3702"/>
    <lineage>
        <taxon>Eukaryota</taxon>
        <taxon>Viridiplantae</taxon>
        <taxon>Streptophyta</taxon>
        <taxon>Embryophyta</taxon>
        <taxon>Tracheophyta</taxon>
        <taxon>Spermatophyta</taxon>
        <taxon>Magnoliopsida</taxon>
        <taxon>eudicotyledons</taxon>
        <taxon>Gunneridae</taxon>
        <taxon>Pentapetalae</taxon>
        <taxon>rosids</taxon>
        <taxon>malvids</taxon>
        <taxon>Brassicales</taxon>
        <taxon>Brassicaceae</taxon>
        <taxon>Camelineae</taxon>
        <taxon>Arabidopsis</taxon>
    </lineage>
</organism>
<gene>
    <name type="primary">ROPGEF2</name>
    <name type="ordered locus">At1g01700</name>
    <name type="ORF">T1N6.8</name>
</gene>
<name>ROGF2_ARATH</name>
<protein>
    <recommendedName>
        <fullName>Rop guanine nucleotide exchange factor 2</fullName>
        <shortName>AtRopGEF2</shortName>
    </recommendedName>
    <alternativeName>
        <fullName>Rho of plants guanine nucleotide exchange factor 2</fullName>
    </alternativeName>
</protein>
<dbReference type="EMBL" id="AC009273">
    <property type="protein sequence ID" value="AAF78400.1"/>
    <property type="status" value="ALT_SEQ"/>
    <property type="molecule type" value="Genomic_DNA"/>
</dbReference>
<dbReference type="EMBL" id="CP002684">
    <property type="protein sequence ID" value="AEE27324.1"/>
    <property type="molecule type" value="Genomic_DNA"/>
</dbReference>
<dbReference type="PIR" id="A86148">
    <property type="entry name" value="A86148"/>
</dbReference>
<dbReference type="RefSeq" id="NP_171676.1">
    <property type="nucleotide sequence ID" value="NM_100052.2"/>
</dbReference>
<dbReference type="SMR" id="Q9LQ89"/>
<dbReference type="BioGRID" id="24485">
    <property type="interactions" value="2"/>
</dbReference>
<dbReference type="FunCoup" id="Q9LQ89">
    <property type="interactions" value="300"/>
</dbReference>
<dbReference type="IntAct" id="Q9LQ89">
    <property type="interactions" value="1"/>
</dbReference>
<dbReference type="MINT" id="Q9LQ89"/>
<dbReference type="STRING" id="3702.Q9LQ89"/>
<dbReference type="iPTMnet" id="Q9LQ89"/>
<dbReference type="PaxDb" id="3702-AT1G01700.1"/>
<dbReference type="EnsemblPlants" id="AT1G01700.1">
    <property type="protein sequence ID" value="AT1G01700.1"/>
    <property type="gene ID" value="AT1G01700"/>
</dbReference>
<dbReference type="GeneID" id="839250"/>
<dbReference type="Gramene" id="AT1G01700.1">
    <property type="protein sequence ID" value="AT1G01700.1"/>
    <property type="gene ID" value="AT1G01700"/>
</dbReference>
<dbReference type="KEGG" id="ath:AT1G01700"/>
<dbReference type="Araport" id="AT1G01700"/>
<dbReference type="TAIR" id="AT1G01700">
    <property type="gene designation" value="ROPGEF2"/>
</dbReference>
<dbReference type="eggNOG" id="ENOG502QV6R">
    <property type="taxonomic scope" value="Eukaryota"/>
</dbReference>
<dbReference type="HOGENOM" id="CLU_019073_4_1_1"/>
<dbReference type="InParanoid" id="Q9LQ89"/>
<dbReference type="PhylomeDB" id="Q9LQ89"/>
<dbReference type="PRO" id="PR:Q9LQ89"/>
<dbReference type="Proteomes" id="UP000006548">
    <property type="component" value="Chromosome 1"/>
</dbReference>
<dbReference type="ExpressionAtlas" id="Q9LQ89">
    <property type="expression patterns" value="baseline and differential"/>
</dbReference>
<dbReference type="GO" id="GO:0005085">
    <property type="term" value="F:guanyl-nucleotide exchange factor activity"/>
    <property type="evidence" value="ECO:0000314"/>
    <property type="project" value="TAIR"/>
</dbReference>
<dbReference type="FunFam" id="1.20.58.2010:FF:000001">
    <property type="entry name" value="Rop guanine nucleotide exchange factor 14"/>
    <property type="match status" value="1"/>
</dbReference>
<dbReference type="FunFam" id="1.20.58.2010:FF:000003">
    <property type="entry name" value="Rop guanine nucleotide exchange factor 14"/>
    <property type="match status" value="1"/>
</dbReference>
<dbReference type="Gene3D" id="1.20.58.2010">
    <property type="entry name" value="PRONE domain, subdomain 1"/>
    <property type="match status" value="2"/>
</dbReference>
<dbReference type="InterPro" id="IPR005512">
    <property type="entry name" value="PRONE_dom"/>
</dbReference>
<dbReference type="InterPro" id="IPR038937">
    <property type="entry name" value="RopGEF"/>
</dbReference>
<dbReference type="PANTHER" id="PTHR33101">
    <property type="entry name" value="ROP GUANINE NUCLEOTIDE EXCHANGE FACTOR 1"/>
    <property type="match status" value="1"/>
</dbReference>
<dbReference type="PANTHER" id="PTHR33101:SF47">
    <property type="entry name" value="ROP GUANINE NUCLEOTIDE EXCHANGE FACTOR 2-RELATED"/>
    <property type="match status" value="1"/>
</dbReference>
<dbReference type="Pfam" id="PF03759">
    <property type="entry name" value="PRONE"/>
    <property type="match status" value="1"/>
</dbReference>
<dbReference type="PROSITE" id="PS51334">
    <property type="entry name" value="PRONE"/>
    <property type="match status" value="1"/>
</dbReference>
<evidence type="ECO:0000250" key="1"/>
<evidence type="ECO:0000255" key="2">
    <source>
        <dbReference type="PROSITE-ProRule" id="PRU00663"/>
    </source>
</evidence>
<evidence type="ECO:0000256" key="3">
    <source>
        <dbReference type="SAM" id="MobiDB-lite"/>
    </source>
</evidence>
<evidence type="ECO:0000269" key="4">
    <source>
    </source>
</evidence>
<evidence type="ECO:0000269" key="5">
    <source>
    </source>
</evidence>
<evidence type="ECO:0000305" key="6"/>
<sequence length="485" mass="54699">MENLPNHEENDDVGYHQSPGPIDPNDHSASETPVYSTMSTDSFAYHRTCSETSGGGFSDQIDETSSFCTEASPSDWPVLTESNNSASSNFPTVFDLKHNQIETDEHLAVQEISEPELETMKERFSKLLLGEDMSGSGKGVCTAVTISNAITNLYATVFGQNLRLEPLEIEQKTTWKREMNCLLSVCDYIFEFIPKSQNLSNGATVEVMESRPRADIYINLPALRKLDSMLMEALDSFQKTEFWYAEEGSLSMKSTRSATGSFRKVIVQRKEEKWWLPIPLVPLQGLSEKARKQLKSKRESTNQIHKAAMAINSSILGEMDIPDSYMATLPKSGKASTGDAIYRHMTSSGRFSPEKLLDRLKIVSEHEALQLADRVEASMYTWRRKACLNNSKSSWNMVKDLMSITERSDKNYVLAERAESLLFCLKQRYPELSQTSLDICKIHCNKDVGKAVLESYSRVLEGLAFNIVAWIDDVLYVDKTMRGEE</sequence>
<comment type="function">
    <text evidence="4">Guanine-nucleotide exchange factor (GEF) that acts as an activator of Rop (Rho of plants) GTPases by promoting the exchange of GDP for GTP.</text>
</comment>
<comment type="subunit">
    <text evidence="5">Interacts with ARC10/ROP11.</text>
</comment>
<comment type="tissue specificity">
    <text evidence="5">Expressed in the vascular tissues of roots, leaves, sepals, petals and siliques.</text>
</comment>
<comment type="domain">
    <text evidence="1">The PRONE (plant-specific Rop nucleotide exchanger) domain is responsible for the GEF activity.</text>
</comment>
<comment type="sequence caution" evidence="6">
    <conflict type="erroneous gene model prediction">
        <sequence resource="EMBL-CDS" id="AAF78400"/>
    </conflict>
</comment>